<evidence type="ECO:0000250" key="1"/>
<evidence type="ECO:0000255" key="2">
    <source>
        <dbReference type="HAMAP-Rule" id="MF_01057"/>
    </source>
</evidence>
<proteinExistence type="inferred from homology"/>
<gene>
    <name evidence="2" type="primary">trmB</name>
    <name type="ordered locus">ACIAD1302</name>
</gene>
<sequence>MSHTKIMSTDQLETQITELDNLPEHREIVTFMRRSAPLNTSQRSALEQYQDLILEYPVGDLRQHFEHPEHPLTVEIGFGMGRSLVLMAKAHPERNFVGIEVHVPGIAQCVYEAGMAGLKNLRVLDADAIQVLREMPDNSINCVQLYFPDPWQKKRHFKRRFVIHERMQLVEQKLELGGTFHAATDWEPYAEWMLDVLDNRPALENLAGKGNSYPRPEWRPQTKFERRGIESGHKINDFIFKKIGS</sequence>
<organism>
    <name type="scientific">Acinetobacter baylyi (strain ATCC 33305 / BD413 / ADP1)</name>
    <dbReference type="NCBI Taxonomy" id="62977"/>
    <lineage>
        <taxon>Bacteria</taxon>
        <taxon>Pseudomonadati</taxon>
        <taxon>Pseudomonadota</taxon>
        <taxon>Gammaproteobacteria</taxon>
        <taxon>Moraxellales</taxon>
        <taxon>Moraxellaceae</taxon>
        <taxon>Acinetobacter</taxon>
    </lineage>
</organism>
<keyword id="KW-0489">Methyltransferase</keyword>
<keyword id="KW-0949">S-adenosyl-L-methionine</keyword>
<keyword id="KW-0808">Transferase</keyword>
<keyword id="KW-0819">tRNA processing</keyword>
<name>TRMB_ACIAD</name>
<accession>Q6FCN6</accession>
<protein>
    <recommendedName>
        <fullName evidence="2">tRNA (guanine-N(7)-)-methyltransferase</fullName>
        <ecNumber evidence="2">2.1.1.33</ecNumber>
    </recommendedName>
    <alternativeName>
        <fullName evidence="2">tRNA (guanine(46)-N(7))-methyltransferase</fullName>
    </alternativeName>
    <alternativeName>
        <fullName evidence="2">tRNA(m7G46)-methyltransferase</fullName>
    </alternativeName>
</protein>
<comment type="function">
    <text evidence="2">Catalyzes the formation of N(7)-methylguanine at position 46 (m7G46) in tRNA.</text>
</comment>
<comment type="catalytic activity">
    <reaction evidence="2">
        <text>guanosine(46) in tRNA + S-adenosyl-L-methionine = N(7)-methylguanosine(46) in tRNA + S-adenosyl-L-homocysteine</text>
        <dbReference type="Rhea" id="RHEA:42708"/>
        <dbReference type="Rhea" id="RHEA-COMP:10188"/>
        <dbReference type="Rhea" id="RHEA-COMP:10189"/>
        <dbReference type="ChEBI" id="CHEBI:57856"/>
        <dbReference type="ChEBI" id="CHEBI:59789"/>
        <dbReference type="ChEBI" id="CHEBI:74269"/>
        <dbReference type="ChEBI" id="CHEBI:74480"/>
        <dbReference type="EC" id="2.1.1.33"/>
    </reaction>
</comment>
<comment type="pathway">
    <text evidence="2">tRNA modification; N(7)-methylguanine-tRNA biosynthesis.</text>
</comment>
<comment type="similarity">
    <text evidence="2">Belongs to the class I-like SAM-binding methyltransferase superfamily. TrmB family.</text>
</comment>
<feature type="chain" id="PRO_0000171283" description="tRNA (guanine-N(7)-)-methyltransferase">
    <location>
        <begin position="1"/>
        <end position="245"/>
    </location>
</feature>
<feature type="active site" evidence="1">
    <location>
        <position position="149"/>
    </location>
</feature>
<feature type="binding site" evidence="2">
    <location>
        <position position="75"/>
    </location>
    <ligand>
        <name>S-adenosyl-L-methionine</name>
        <dbReference type="ChEBI" id="CHEBI:59789"/>
    </ligand>
</feature>
<feature type="binding site" evidence="2">
    <location>
        <position position="100"/>
    </location>
    <ligand>
        <name>S-adenosyl-L-methionine</name>
        <dbReference type="ChEBI" id="CHEBI:59789"/>
    </ligand>
</feature>
<feature type="binding site" evidence="2">
    <location>
        <position position="127"/>
    </location>
    <ligand>
        <name>S-adenosyl-L-methionine</name>
        <dbReference type="ChEBI" id="CHEBI:59789"/>
    </ligand>
</feature>
<feature type="binding site" evidence="2">
    <location>
        <position position="149"/>
    </location>
    <ligand>
        <name>S-adenosyl-L-methionine</name>
        <dbReference type="ChEBI" id="CHEBI:59789"/>
    </ligand>
</feature>
<feature type="binding site" evidence="2">
    <location>
        <position position="153"/>
    </location>
    <ligand>
        <name>substrate</name>
    </ligand>
</feature>
<feature type="binding site" evidence="2">
    <location>
        <position position="185"/>
    </location>
    <ligand>
        <name>substrate</name>
    </ligand>
</feature>
<feature type="binding site" evidence="2">
    <location>
        <begin position="222"/>
        <end position="225"/>
    </location>
    <ligand>
        <name>substrate</name>
    </ligand>
</feature>
<reference key="1">
    <citation type="journal article" date="2004" name="Nucleic Acids Res.">
        <title>Unique features revealed by the genome sequence of Acinetobacter sp. ADP1, a versatile and naturally transformation competent bacterium.</title>
        <authorList>
            <person name="Barbe V."/>
            <person name="Vallenet D."/>
            <person name="Fonknechten N."/>
            <person name="Kreimeyer A."/>
            <person name="Oztas S."/>
            <person name="Labarre L."/>
            <person name="Cruveiller S."/>
            <person name="Robert C."/>
            <person name="Duprat S."/>
            <person name="Wincker P."/>
            <person name="Ornston L.N."/>
            <person name="Weissenbach J."/>
            <person name="Marliere P."/>
            <person name="Cohen G.N."/>
            <person name="Medigue C."/>
        </authorList>
    </citation>
    <scope>NUCLEOTIDE SEQUENCE [LARGE SCALE GENOMIC DNA]</scope>
    <source>
        <strain>ATCC 33305 / BD413 / ADP1</strain>
    </source>
</reference>
<dbReference type="EC" id="2.1.1.33" evidence="2"/>
<dbReference type="EMBL" id="CR543861">
    <property type="protein sequence ID" value="CAG68173.1"/>
    <property type="molecule type" value="Genomic_DNA"/>
</dbReference>
<dbReference type="SMR" id="Q6FCN6"/>
<dbReference type="STRING" id="202950.GCA_001485005_01061"/>
<dbReference type="KEGG" id="aci:ACIAD1302"/>
<dbReference type="eggNOG" id="COG0220">
    <property type="taxonomic scope" value="Bacteria"/>
</dbReference>
<dbReference type="HOGENOM" id="CLU_050910_0_1_6"/>
<dbReference type="UniPathway" id="UPA00989"/>
<dbReference type="Proteomes" id="UP000000430">
    <property type="component" value="Chromosome"/>
</dbReference>
<dbReference type="GO" id="GO:0043527">
    <property type="term" value="C:tRNA methyltransferase complex"/>
    <property type="evidence" value="ECO:0007669"/>
    <property type="project" value="TreeGrafter"/>
</dbReference>
<dbReference type="GO" id="GO:0008176">
    <property type="term" value="F:tRNA (guanine(46)-N7)-methyltransferase activity"/>
    <property type="evidence" value="ECO:0007669"/>
    <property type="project" value="UniProtKB-UniRule"/>
</dbReference>
<dbReference type="Gene3D" id="3.40.50.150">
    <property type="entry name" value="Vaccinia Virus protein VP39"/>
    <property type="match status" value="1"/>
</dbReference>
<dbReference type="HAMAP" id="MF_01057">
    <property type="entry name" value="tRNA_methyltr_TrmB"/>
    <property type="match status" value="1"/>
</dbReference>
<dbReference type="InterPro" id="IPR029063">
    <property type="entry name" value="SAM-dependent_MTases_sf"/>
</dbReference>
<dbReference type="InterPro" id="IPR003358">
    <property type="entry name" value="tRNA_(Gua-N-7)_MeTrfase_Trmb"/>
</dbReference>
<dbReference type="InterPro" id="IPR055361">
    <property type="entry name" value="tRNA_methyltr_TrmB_bact"/>
</dbReference>
<dbReference type="NCBIfam" id="TIGR00091">
    <property type="entry name" value="tRNA (guanosine(46)-N7)-methyltransferase TrmB"/>
    <property type="match status" value="1"/>
</dbReference>
<dbReference type="PANTHER" id="PTHR23417">
    <property type="entry name" value="3-DEOXY-D-MANNO-OCTULOSONIC-ACID TRANSFERASE/TRNA GUANINE-N 7 - -METHYLTRANSFERASE"/>
    <property type="match status" value="1"/>
</dbReference>
<dbReference type="PANTHER" id="PTHR23417:SF14">
    <property type="entry name" value="PENTACOTRIPEPTIDE-REPEAT REGION OF PRORP DOMAIN-CONTAINING PROTEIN"/>
    <property type="match status" value="1"/>
</dbReference>
<dbReference type="Pfam" id="PF02390">
    <property type="entry name" value="Methyltransf_4"/>
    <property type="match status" value="1"/>
</dbReference>
<dbReference type="SUPFAM" id="SSF53335">
    <property type="entry name" value="S-adenosyl-L-methionine-dependent methyltransferases"/>
    <property type="match status" value="1"/>
</dbReference>
<dbReference type="PROSITE" id="PS51625">
    <property type="entry name" value="SAM_MT_TRMB"/>
    <property type="match status" value="1"/>
</dbReference>